<accession>Q4P6N0</accession>
<accession>A0A0D1DYW3</accession>
<organism>
    <name type="scientific">Mycosarcoma maydis</name>
    <name type="common">Corn smut fungus</name>
    <name type="synonym">Ustilago maydis</name>
    <dbReference type="NCBI Taxonomy" id="5270"/>
    <lineage>
        <taxon>Eukaryota</taxon>
        <taxon>Fungi</taxon>
        <taxon>Dikarya</taxon>
        <taxon>Basidiomycota</taxon>
        <taxon>Ustilaginomycotina</taxon>
        <taxon>Ustilaginomycetes</taxon>
        <taxon>Ustilaginales</taxon>
        <taxon>Ustilaginaceae</taxon>
        <taxon>Mycosarcoma</taxon>
    </lineage>
</organism>
<feature type="chain" id="PRO_0000232215" description="ATP-dependent RNA helicase HAS1">
    <location>
        <begin position="1"/>
        <end position="574"/>
    </location>
</feature>
<feature type="domain" description="Helicase ATP-binding" evidence="2">
    <location>
        <begin position="81"/>
        <end position="257"/>
    </location>
</feature>
<feature type="domain" description="Helicase C-terminal" evidence="3">
    <location>
        <begin position="271"/>
        <end position="440"/>
    </location>
</feature>
<feature type="region of interest" description="Disordered" evidence="5">
    <location>
        <begin position="31"/>
        <end position="53"/>
    </location>
</feature>
<feature type="region of interest" description="Disordered" evidence="5">
    <location>
        <begin position="500"/>
        <end position="574"/>
    </location>
</feature>
<feature type="short sequence motif" description="Q motif" evidence="4">
    <location>
        <begin position="50"/>
        <end position="78"/>
    </location>
</feature>
<feature type="short sequence motif" description="DEAD box" evidence="2">
    <location>
        <begin position="204"/>
        <end position="207"/>
    </location>
</feature>
<feature type="short sequence motif" description="Bipartite nuclear localization signal" evidence="1">
    <location>
        <begin position="283"/>
        <end position="299"/>
    </location>
</feature>
<feature type="compositionally biased region" description="Low complexity" evidence="5">
    <location>
        <begin position="31"/>
        <end position="47"/>
    </location>
</feature>
<feature type="compositionally biased region" description="Acidic residues" evidence="5">
    <location>
        <begin position="519"/>
        <end position="528"/>
    </location>
</feature>
<feature type="compositionally biased region" description="Basic and acidic residues" evidence="5">
    <location>
        <begin position="530"/>
        <end position="541"/>
    </location>
</feature>
<feature type="binding site" evidence="2">
    <location>
        <begin position="94"/>
        <end position="101"/>
    </location>
    <ligand>
        <name>ATP</name>
        <dbReference type="ChEBI" id="CHEBI:30616"/>
    </ligand>
</feature>
<evidence type="ECO:0000250" key="1"/>
<evidence type="ECO:0000255" key="2">
    <source>
        <dbReference type="PROSITE-ProRule" id="PRU00541"/>
    </source>
</evidence>
<evidence type="ECO:0000255" key="3">
    <source>
        <dbReference type="PROSITE-ProRule" id="PRU00542"/>
    </source>
</evidence>
<evidence type="ECO:0000255" key="4">
    <source>
        <dbReference type="PROSITE-ProRule" id="PRU00552"/>
    </source>
</evidence>
<evidence type="ECO:0000256" key="5">
    <source>
        <dbReference type="SAM" id="MobiDB-lite"/>
    </source>
</evidence>
<evidence type="ECO:0000305" key="6"/>
<protein>
    <recommendedName>
        <fullName>ATP-dependent RNA helicase HAS1</fullName>
        <ecNumber>3.6.4.13</ecNumber>
    </recommendedName>
</protein>
<keyword id="KW-0067">ATP-binding</keyword>
<keyword id="KW-0347">Helicase</keyword>
<keyword id="KW-0378">Hydrolase</keyword>
<keyword id="KW-0547">Nucleotide-binding</keyword>
<keyword id="KW-0539">Nucleus</keyword>
<keyword id="KW-1185">Reference proteome</keyword>
<keyword id="KW-0690">Ribosome biogenesis</keyword>
<keyword id="KW-0694">RNA-binding</keyword>
<keyword id="KW-0698">rRNA processing</keyword>
<reference key="1">
    <citation type="journal article" date="2006" name="Nature">
        <title>Insights from the genome of the biotrophic fungal plant pathogen Ustilago maydis.</title>
        <authorList>
            <person name="Kaemper J."/>
            <person name="Kahmann R."/>
            <person name="Boelker M."/>
            <person name="Ma L.-J."/>
            <person name="Brefort T."/>
            <person name="Saville B.J."/>
            <person name="Banuett F."/>
            <person name="Kronstad J.W."/>
            <person name="Gold S.E."/>
            <person name="Mueller O."/>
            <person name="Perlin M.H."/>
            <person name="Woesten H.A.B."/>
            <person name="de Vries R."/>
            <person name="Ruiz-Herrera J."/>
            <person name="Reynaga-Pena C.G."/>
            <person name="Snetselaar K."/>
            <person name="McCann M."/>
            <person name="Perez-Martin J."/>
            <person name="Feldbruegge M."/>
            <person name="Basse C.W."/>
            <person name="Steinberg G."/>
            <person name="Ibeas J.I."/>
            <person name="Holloman W."/>
            <person name="Guzman P."/>
            <person name="Farman M.L."/>
            <person name="Stajich J.E."/>
            <person name="Sentandreu R."/>
            <person name="Gonzalez-Prieto J.M."/>
            <person name="Kennell J.C."/>
            <person name="Molina L."/>
            <person name="Schirawski J."/>
            <person name="Mendoza-Mendoza A."/>
            <person name="Greilinger D."/>
            <person name="Muench K."/>
            <person name="Roessel N."/>
            <person name="Scherer M."/>
            <person name="Vranes M."/>
            <person name="Ladendorf O."/>
            <person name="Vincon V."/>
            <person name="Fuchs U."/>
            <person name="Sandrock B."/>
            <person name="Meng S."/>
            <person name="Ho E.C.H."/>
            <person name="Cahill M.J."/>
            <person name="Boyce K.J."/>
            <person name="Klose J."/>
            <person name="Klosterman S.J."/>
            <person name="Deelstra H.J."/>
            <person name="Ortiz-Castellanos L."/>
            <person name="Li W."/>
            <person name="Sanchez-Alonso P."/>
            <person name="Schreier P.H."/>
            <person name="Haeuser-Hahn I."/>
            <person name="Vaupel M."/>
            <person name="Koopmann E."/>
            <person name="Friedrich G."/>
            <person name="Voss H."/>
            <person name="Schlueter T."/>
            <person name="Margolis J."/>
            <person name="Platt D."/>
            <person name="Swimmer C."/>
            <person name="Gnirke A."/>
            <person name="Chen F."/>
            <person name="Vysotskaia V."/>
            <person name="Mannhaupt G."/>
            <person name="Gueldener U."/>
            <person name="Muensterkoetter M."/>
            <person name="Haase D."/>
            <person name="Oesterheld M."/>
            <person name="Mewes H.-W."/>
            <person name="Mauceli E.W."/>
            <person name="DeCaprio D."/>
            <person name="Wade C.M."/>
            <person name="Butler J."/>
            <person name="Young S.K."/>
            <person name="Jaffe D.B."/>
            <person name="Calvo S.E."/>
            <person name="Nusbaum C."/>
            <person name="Galagan J.E."/>
            <person name="Birren B.W."/>
        </authorList>
    </citation>
    <scope>NUCLEOTIDE SEQUENCE [LARGE SCALE GENOMIC DNA]</scope>
    <source>
        <strain>DSM 14603 / FGSC 9021 / UM521</strain>
    </source>
</reference>
<reference key="2">
    <citation type="submission" date="2014-09" db="EMBL/GenBank/DDBJ databases">
        <authorList>
            <person name="Gueldener U."/>
            <person name="Muensterkoetter M."/>
            <person name="Walter M.C."/>
            <person name="Mannhaupt G."/>
            <person name="Kahmann R."/>
        </authorList>
    </citation>
    <scope>GENOME REANNOTATION</scope>
    <source>
        <strain>DSM 14603 / FGSC 9021 / UM521</strain>
    </source>
</reference>
<proteinExistence type="inferred from homology"/>
<comment type="function">
    <text>ATP-dependent RNA helicase involved in 40S ribosomal subunit biogenesis. Required for the processing and cleavage of 35S pre-rRNA at sites A0, A1, and A2, leading to mature 18S rRNA.</text>
</comment>
<comment type="catalytic activity">
    <reaction>
        <text>ATP + H2O = ADP + phosphate + H(+)</text>
        <dbReference type="Rhea" id="RHEA:13065"/>
        <dbReference type="ChEBI" id="CHEBI:15377"/>
        <dbReference type="ChEBI" id="CHEBI:15378"/>
        <dbReference type="ChEBI" id="CHEBI:30616"/>
        <dbReference type="ChEBI" id="CHEBI:43474"/>
        <dbReference type="ChEBI" id="CHEBI:456216"/>
        <dbReference type="EC" id="3.6.4.13"/>
    </reaction>
</comment>
<comment type="subunit">
    <text evidence="1">Associates in the nucleolus with the 60S and pre-60S ribosomal subunits.</text>
</comment>
<comment type="subcellular location">
    <subcellularLocation>
        <location evidence="1">Nucleus</location>
        <location evidence="1">Nucleolus</location>
    </subcellularLocation>
</comment>
<comment type="domain">
    <text>The Q motif is unique to and characteristic of the DEAD box family of RNA helicases and controls ATP binding and hydrolysis.</text>
</comment>
<comment type="similarity">
    <text evidence="6">Belongs to the DEAD box helicase family. DDX18/HAS1 subfamily.</text>
</comment>
<dbReference type="EC" id="3.6.4.13"/>
<dbReference type="EMBL" id="CM003151">
    <property type="protein sequence ID" value="KIS67735.1"/>
    <property type="molecule type" value="Genomic_DNA"/>
</dbReference>
<dbReference type="RefSeq" id="XP_011390763.1">
    <property type="nucleotide sequence ID" value="XM_011392461.1"/>
</dbReference>
<dbReference type="SMR" id="Q4P6N0"/>
<dbReference type="FunCoup" id="Q4P6N0">
    <property type="interactions" value="583"/>
</dbReference>
<dbReference type="STRING" id="237631.Q4P6N0"/>
<dbReference type="EnsemblFungi" id="KIS67735">
    <property type="protein sequence ID" value="KIS67735"/>
    <property type="gene ID" value="UMAG_10410"/>
</dbReference>
<dbReference type="GeneID" id="23566448"/>
<dbReference type="KEGG" id="uma:UMAG_10410"/>
<dbReference type="VEuPathDB" id="FungiDB:UMAG_10410"/>
<dbReference type="eggNOG" id="KOG0342">
    <property type="taxonomic scope" value="Eukaryota"/>
</dbReference>
<dbReference type="HOGENOM" id="CLU_003041_26_5_1"/>
<dbReference type="InParanoid" id="Q4P6N0"/>
<dbReference type="OrthoDB" id="10259640at2759"/>
<dbReference type="Proteomes" id="UP000000561">
    <property type="component" value="Chromosome 12"/>
</dbReference>
<dbReference type="GO" id="GO:0005730">
    <property type="term" value="C:nucleolus"/>
    <property type="evidence" value="ECO:0000318"/>
    <property type="project" value="GO_Central"/>
</dbReference>
<dbReference type="GO" id="GO:0005524">
    <property type="term" value="F:ATP binding"/>
    <property type="evidence" value="ECO:0007669"/>
    <property type="project" value="UniProtKB-KW"/>
</dbReference>
<dbReference type="GO" id="GO:0016887">
    <property type="term" value="F:ATP hydrolysis activity"/>
    <property type="evidence" value="ECO:0007669"/>
    <property type="project" value="RHEA"/>
</dbReference>
<dbReference type="GO" id="GO:0003723">
    <property type="term" value="F:RNA binding"/>
    <property type="evidence" value="ECO:0007669"/>
    <property type="project" value="UniProtKB-KW"/>
</dbReference>
<dbReference type="GO" id="GO:0003724">
    <property type="term" value="F:RNA helicase activity"/>
    <property type="evidence" value="ECO:0007669"/>
    <property type="project" value="UniProtKB-EC"/>
</dbReference>
<dbReference type="GO" id="GO:0000463">
    <property type="term" value="P:maturation of LSU-rRNA from tricistronic rRNA transcript (SSU-rRNA, 5.8S rRNA, LSU-rRNA)"/>
    <property type="evidence" value="ECO:0000318"/>
    <property type="project" value="GO_Central"/>
</dbReference>
<dbReference type="CDD" id="cd17942">
    <property type="entry name" value="DEADc_DDX18"/>
    <property type="match status" value="1"/>
</dbReference>
<dbReference type="CDD" id="cd18787">
    <property type="entry name" value="SF2_C_DEAD"/>
    <property type="match status" value="1"/>
</dbReference>
<dbReference type="FunFam" id="3.40.50.300:FF:000379">
    <property type="entry name" value="RNA helicase"/>
    <property type="match status" value="1"/>
</dbReference>
<dbReference type="FunFam" id="3.40.50.300:FF:000460">
    <property type="entry name" value="RNA helicase"/>
    <property type="match status" value="1"/>
</dbReference>
<dbReference type="Gene3D" id="3.40.50.300">
    <property type="entry name" value="P-loop containing nucleotide triphosphate hydrolases"/>
    <property type="match status" value="2"/>
</dbReference>
<dbReference type="InterPro" id="IPR044773">
    <property type="entry name" value="DDX18/Has1_DEADc"/>
</dbReference>
<dbReference type="InterPro" id="IPR011545">
    <property type="entry name" value="DEAD/DEAH_box_helicase_dom"/>
</dbReference>
<dbReference type="InterPro" id="IPR014001">
    <property type="entry name" value="Helicase_ATP-bd"/>
</dbReference>
<dbReference type="InterPro" id="IPR001650">
    <property type="entry name" value="Helicase_C-like"/>
</dbReference>
<dbReference type="InterPro" id="IPR027417">
    <property type="entry name" value="P-loop_NTPase"/>
</dbReference>
<dbReference type="InterPro" id="IPR014014">
    <property type="entry name" value="RNA_helicase_DEAD_Q_motif"/>
</dbReference>
<dbReference type="InterPro" id="IPR025313">
    <property type="entry name" value="SPB4-like_CTE"/>
</dbReference>
<dbReference type="PANTHER" id="PTHR24031">
    <property type="entry name" value="RNA HELICASE"/>
    <property type="match status" value="1"/>
</dbReference>
<dbReference type="Pfam" id="PF13959">
    <property type="entry name" value="CTE_SPB4"/>
    <property type="match status" value="1"/>
</dbReference>
<dbReference type="Pfam" id="PF00270">
    <property type="entry name" value="DEAD"/>
    <property type="match status" value="1"/>
</dbReference>
<dbReference type="Pfam" id="PF00271">
    <property type="entry name" value="Helicase_C"/>
    <property type="match status" value="1"/>
</dbReference>
<dbReference type="SMART" id="SM00487">
    <property type="entry name" value="DEXDc"/>
    <property type="match status" value="1"/>
</dbReference>
<dbReference type="SMART" id="SM01178">
    <property type="entry name" value="DUF4217"/>
    <property type="match status" value="1"/>
</dbReference>
<dbReference type="SMART" id="SM00490">
    <property type="entry name" value="HELICc"/>
    <property type="match status" value="1"/>
</dbReference>
<dbReference type="SUPFAM" id="SSF52540">
    <property type="entry name" value="P-loop containing nucleoside triphosphate hydrolases"/>
    <property type="match status" value="2"/>
</dbReference>
<dbReference type="PROSITE" id="PS51192">
    <property type="entry name" value="HELICASE_ATP_BIND_1"/>
    <property type="match status" value="1"/>
</dbReference>
<dbReference type="PROSITE" id="PS51194">
    <property type="entry name" value="HELICASE_CTER"/>
    <property type="match status" value="1"/>
</dbReference>
<dbReference type="PROSITE" id="PS51195">
    <property type="entry name" value="Q_MOTIF"/>
    <property type="match status" value="1"/>
</dbReference>
<sequence length="574" mass="63008">MAPHKSDDVDAEAELASQLAADVAAAESSAATKAKASSASSSSTPAAERQPFSILDLSEPTRKAIDAMGFKTMTEVQARCIPPLMAGKDVLGAAQTGSGKTLSFLIPAIEMLHRLKFKPRNGTGAIIISPTRELALQIFGVAKELMAHHHQTFGIIMGGANRRAEADKLQKGVNLIVATPGRLLDHLQNTKGFVFSNLKALCIDEADRILEIGFEDEMRQIVKILPNDNRQSMLFSATQTTKVQDLARISLRPGPLYINVHADLAASTVSRLEQGYVVCESDRRFLLLFTFLKKNAGKKIIVFMSSCNSVKYHSDLLNFIDVPVLDLHGKQKQQKRTNTFFEYCNAPCGTLLCTDVAARGLDIPSVDWIIQFDPPDDPRDYIHRVGRTARAGNSGKSLLFLLPTELGFLRFLKVAKVPLNEYTFPSDKVANVQGQLEKLISKNYYLHQSARDGYRSYLQAYGSYSLKRIFDIHKLDLAKVAKAYGFSVPPKVNITIGTGLKTSASSSSGSGGKRKEVDVDGEGEDADGEINPKRQQSDRRAYYRKNHQNGGSKDHFRKSGANATGNKGGKQWSR</sequence>
<gene>
    <name type="primary">HAS1</name>
    <name type="ORF">UMAG_10410</name>
</gene>
<name>HAS1_MYCMD</name>